<comment type="function">
    <text evidence="1">Hydrolyzes ribosome-free peptidyl-tRNAs (with 1 or more amino acids incorporated), which drop off the ribosome during protein synthesis, or as a result of ribosome stalling.</text>
</comment>
<comment type="function">
    <text evidence="1">Catalyzes the release of premature peptidyl moieties from peptidyl-tRNA molecules trapped in stalled 50S ribosomal subunits, and thus maintains levels of free tRNAs and 50S ribosomes.</text>
</comment>
<comment type="catalytic activity">
    <reaction evidence="1">
        <text>an N-acyl-L-alpha-aminoacyl-tRNA + H2O = an N-acyl-L-amino acid + a tRNA + H(+)</text>
        <dbReference type="Rhea" id="RHEA:54448"/>
        <dbReference type="Rhea" id="RHEA-COMP:10123"/>
        <dbReference type="Rhea" id="RHEA-COMP:13883"/>
        <dbReference type="ChEBI" id="CHEBI:15377"/>
        <dbReference type="ChEBI" id="CHEBI:15378"/>
        <dbReference type="ChEBI" id="CHEBI:59874"/>
        <dbReference type="ChEBI" id="CHEBI:78442"/>
        <dbReference type="ChEBI" id="CHEBI:138191"/>
        <dbReference type="EC" id="3.1.1.29"/>
    </reaction>
</comment>
<comment type="subunit">
    <text evidence="1">Monomer.</text>
</comment>
<comment type="subcellular location">
    <subcellularLocation>
        <location evidence="1">Cytoplasm</location>
    </subcellularLocation>
</comment>
<comment type="similarity">
    <text evidence="1">Belongs to the PTH family.</text>
</comment>
<evidence type="ECO:0000255" key="1">
    <source>
        <dbReference type="HAMAP-Rule" id="MF_00083"/>
    </source>
</evidence>
<name>PTH_SYNE7</name>
<reference key="1">
    <citation type="submission" date="2005-08" db="EMBL/GenBank/DDBJ databases">
        <title>Complete sequence of chromosome 1 of Synechococcus elongatus PCC 7942.</title>
        <authorList>
            <consortium name="US DOE Joint Genome Institute"/>
            <person name="Copeland A."/>
            <person name="Lucas S."/>
            <person name="Lapidus A."/>
            <person name="Barry K."/>
            <person name="Detter J.C."/>
            <person name="Glavina T."/>
            <person name="Hammon N."/>
            <person name="Israni S."/>
            <person name="Pitluck S."/>
            <person name="Schmutz J."/>
            <person name="Larimer F."/>
            <person name="Land M."/>
            <person name="Kyrpides N."/>
            <person name="Lykidis A."/>
            <person name="Golden S."/>
            <person name="Richardson P."/>
        </authorList>
    </citation>
    <scope>NUCLEOTIDE SEQUENCE [LARGE SCALE GENOMIC DNA]</scope>
    <source>
        <strain>ATCC 33912 / PCC 7942 / FACHB-805</strain>
    </source>
</reference>
<proteinExistence type="inferred from homology"/>
<protein>
    <recommendedName>
        <fullName evidence="1">Peptidyl-tRNA hydrolase</fullName>
        <shortName evidence="1">Pth</shortName>
        <ecNumber evidence="1">3.1.1.29</ecNumber>
    </recommendedName>
</protein>
<organism>
    <name type="scientific">Synechococcus elongatus (strain ATCC 33912 / PCC 7942 / FACHB-805)</name>
    <name type="common">Anacystis nidulans R2</name>
    <dbReference type="NCBI Taxonomy" id="1140"/>
    <lineage>
        <taxon>Bacteria</taxon>
        <taxon>Bacillati</taxon>
        <taxon>Cyanobacteriota</taxon>
        <taxon>Cyanophyceae</taxon>
        <taxon>Synechococcales</taxon>
        <taxon>Synechococcaceae</taxon>
        <taxon>Synechococcus</taxon>
    </lineage>
</organism>
<gene>
    <name evidence="1" type="primary">pth</name>
    <name type="ordered locus">Synpcc7942_0227</name>
</gene>
<sequence length="208" mass="23083">MSEDRPTLLVGLGNPGQKYAETRHNIGFMLIDRLAQDWGVKLSEDRKFQGEYGETAVPGLGKIRLLKPTTFMNQSGRSLRAVLDWYKLTPQQILVIYDDMDLPLGRLRLRQSGSAGTHNGMKSIISHLSSKDFPRLRLGISLPRSQSNDRHDATVSHVLGKFAVSEQSLLKQVLDLAQEATETALRSGVETAMNRYNARSLEAPAPVA</sequence>
<accession>Q31RR0</accession>
<feature type="chain" id="PRO_0000264128" description="Peptidyl-tRNA hydrolase">
    <location>
        <begin position="1"/>
        <end position="208"/>
    </location>
</feature>
<feature type="active site" description="Proton acceptor" evidence="1">
    <location>
        <position position="24"/>
    </location>
</feature>
<feature type="binding site" evidence="1">
    <location>
        <position position="19"/>
    </location>
    <ligand>
        <name>tRNA</name>
        <dbReference type="ChEBI" id="CHEBI:17843"/>
    </ligand>
</feature>
<feature type="binding site" evidence="1">
    <location>
        <position position="71"/>
    </location>
    <ligand>
        <name>tRNA</name>
        <dbReference type="ChEBI" id="CHEBI:17843"/>
    </ligand>
</feature>
<feature type="binding site" evidence="1">
    <location>
        <position position="73"/>
    </location>
    <ligand>
        <name>tRNA</name>
        <dbReference type="ChEBI" id="CHEBI:17843"/>
    </ligand>
</feature>
<feature type="binding site" evidence="1">
    <location>
        <position position="119"/>
    </location>
    <ligand>
        <name>tRNA</name>
        <dbReference type="ChEBI" id="CHEBI:17843"/>
    </ligand>
</feature>
<feature type="site" description="Discriminates between blocked and unblocked aminoacyl-tRNA" evidence="1">
    <location>
        <position position="14"/>
    </location>
</feature>
<feature type="site" description="Stabilizes the basic form of H active site to accept a proton" evidence="1">
    <location>
        <position position="98"/>
    </location>
</feature>
<dbReference type="EC" id="3.1.1.29" evidence="1"/>
<dbReference type="EMBL" id="CP000100">
    <property type="protein sequence ID" value="ABB56259.1"/>
    <property type="molecule type" value="Genomic_DNA"/>
</dbReference>
<dbReference type="RefSeq" id="WP_011243598.1">
    <property type="nucleotide sequence ID" value="NZ_JACJTX010000002.1"/>
</dbReference>
<dbReference type="SMR" id="Q31RR0"/>
<dbReference type="STRING" id="1140.Synpcc7942_0227"/>
<dbReference type="PaxDb" id="1140-Synpcc7942_0227"/>
<dbReference type="GeneID" id="72429041"/>
<dbReference type="KEGG" id="syf:Synpcc7942_0227"/>
<dbReference type="eggNOG" id="COG0193">
    <property type="taxonomic scope" value="Bacteria"/>
</dbReference>
<dbReference type="HOGENOM" id="CLU_062456_4_1_3"/>
<dbReference type="OrthoDB" id="9800507at2"/>
<dbReference type="BioCyc" id="SYNEL:SYNPCC7942_0227-MONOMER"/>
<dbReference type="Proteomes" id="UP000889800">
    <property type="component" value="Chromosome"/>
</dbReference>
<dbReference type="GO" id="GO:0005737">
    <property type="term" value="C:cytoplasm"/>
    <property type="evidence" value="ECO:0007669"/>
    <property type="project" value="UniProtKB-SubCell"/>
</dbReference>
<dbReference type="GO" id="GO:0004045">
    <property type="term" value="F:peptidyl-tRNA hydrolase activity"/>
    <property type="evidence" value="ECO:0007669"/>
    <property type="project" value="UniProtKB-UniRule"/>
</dbReference>
<dbReference type="GO" id="GO:0000049">
    <property type="term" value="F:tRNA binding"/>
    <property type="evidence" value="ECO:0007669"/>
    <property type="project" value="UniProtKB-UniRule"/>
</dbReference>
<dbReference type="GO" id="GO:0006515">
    <property type="term" value="P:protein quality control for misfolded or incompletely synthesized proteins"/>
    <property type="evidence" value="ECO:0007669"/>
    <property type="project" value="UniProtKB-UniRule"/>
</dbReference>
<dbReference type="GO" id="GO:0072344">
    <property type="term" value="P:rescue of stalled ribosome"/>
    <property type="evidence" value="ECO:0007669"/>
    <property type="project" value="UniProtKB-UniRule"/>
</dbReference>
<dbReference type="CDD" id="cd00462">
    <property type="entry name" value="PTH"/>
    <property type="match status" value="1"/>
</dbReference>
<dbReference type="FunFam" id="3.40.50.1470:FF:000001">
    <property type="entry name" value="Peptidyl-tRNA hydrolase"/>
    <property type="match status" value="1"/>
</dbReference>
<dbReference type="Gene3D" id="3.40.50.1470">
    <property type="entry name" value="Peptidyl-tRNA hydrolase"/>
    <property type="match status" value="1"/>
</dbReference>
<dbReference type="HAMAP" id="MF_00083">
    <property type="entry name" value="Pept_tRNA_hydro_bact"/>
    <property type="match status" value="1"/>
</dbReference>
<dbReference type="InterPro" id="IPR001328">
    <property type="entry name" value="Pept_tRNA_hydro"/>
</dbReference>
<dbReference type="InterPro" id="IPR018171">
    <property type="entry name" value="Pept_tRNA_hydro_CS"/>
</dbReference>
<dbReference type="InterPro" id="IPR036416">
    <property type="entry name" value="Pept_tRNA_hydro_sf"/>
</dbReference>
<dbReference type="NCBIfam" id="TIGR00447">
    <property type="entry name" value="pth"/>
    <property type="match status" value="1"/>
</dbReference>
<dbReference type="PANTHER" id="PTHR17224">
    <property type="entry name" value="PEPTIDYL-TRNA HYDROLASE"/>
    <property type="match status" value="1"/>
</dbReference>
<dbReference type="PANTHER" id="PTHR17224:SF1">
    <property type="entry name" value="PEPTIDYL-TRNA HYDROLASE"/>
    <property type="match status" value="1"/>
</dbReference>
<dbReference type="Pfam" id="PF01195">
    <property type="entry name" value="Pept_tRNA_hydro"/>
    <property type="match status" value="1"/>
</dbReference>
<dbReference type="SUPFAM" id="SSF53178">
    <property type="entry name" value="Peptidyl-tRNA hydrolase-like"/>
    <property type="match status" value="1"/>
</dbReference>
<dbReference type="PROSITE" id="PS01195">
    <property type="entry name" value="PEPT_TRNA_HYDROL_1"/>
    <property type="match status" value="1"/>
</dbReference>
<dbReference type="PROSITE" id="PS01196">
    <property type="entry name" value="PEPT_TRNA_HYDROL_2"/>
    <property type="match status" value="1"/>
</dbReference>
<keyword id="KW-0963">Cytoplasm</keyword>
<keyword id="KW-0378">Hydrolase</keyword>
<keyword id="KW-1185">Reference proteome</keyword>
<keyword id="KW-0694">RNA-binding</keyword>
<keyword id="KW-0820">tRNA-binding</keyword>